<organism>
    <name type="scientific">Candida albicans (strain SC5314 / ATCC MYA-2876)</name>
    <name type="common">Yeast</name>
    <dbReference type="NCBI Taxonomy" id="237561"/>
    <lineage>
        <taxon>Eukaryota</taxon>
        <taxon>Fungi</taxon>
        <taxon>Dikarya</taxon>
        <taxon>Ascomycota</taxon>
        <taxon>Saccharomycotina</taxon>
        <taxon>Pichiomycetes</taxon>
        <taxon>Debaryomycetaceae</taxon>
        <taxon>Candida/Lodderomyces clade</taxon>
        <taxon>Candida</taxon>
    </lineage>
</organism>
<evidence type="ECO:0000250" key="1"/>
<evidence type="ECO:0000255" key="2">
    <source>
        <dbReference type="PROSITE-ProRule" id="PRU00433"/>
    </source>
</evidence>
<evidence type="ECO:0000305" key="3"/>
<dbReference type="EMBL" id="U57896">
    <property type="protein sequence ID" value="AAB68996.1"/>
    <property type="molecule type" value="Genomic_DNA"/>
</dbReference>
<dbReference type="EMBL" id="CP017624">
    <property type="protein sequence ID" value="AOW27988.1"/>
    <property type="molecule type" value="Genomic_DNA"/>
</dbReference>
<dbReference type="RefSeq" id="XP_714415.1">
    <property type="nucleotide sequence ID" value="XM_709322.1"/>
</dbReference>
<dbReference type="SMR" id="P53698"/>
<dbReference type="FunCoup" id="P53698">
    <property type="interactions" value="616"/>
</dbReference>
<dbReference type="STRING" id="237561.P53698"/>
<dbReference type="EnsemblFungi" id="C2_10110W_A-T">
    <property type="protein sequence ID" value="C2_10110W_A-T-p1"/>
    <property type="gene ID" value="C2_10110W_A"/>
</dbReference>
<dbReference type="GeneID" id="3643937"/>
<dbReference type="KEGG" id="cal:CAALFM_C210110WA"/>
<dbReference type="CGD" id="CAL0000196284">
    <property type="gene designation" value="CYC1"/>
</dbReference>
<dbReference type="VEuPathDB" id="FungiDB:C2_10110W_A"/>
<dbReference type="eggNOG" id="KOG3453">
    <property type="taxonomic scope" value="Eukaryota"/>
</dbReference>
<dbReference type="HOGENOM" id="CLU_060944_3_0_1"/>
<dbReference type="InParanoid" id="P53698"/>
<dbReference type="OMA" id="KARCAQC"/>
<dbReference type="OrthoDB" id="449280at2759"/>
<dbReference type="PRO" id="PR:P53698"/>
<dbReference type="Proteomes" id="UP000000559">
    <property type="component" value="Chromosome 2"/>
</dbReference>
<dbReference type="GO" id="GO:0005737">
    <property type="term" value="C:cytoplasm"/>
    <property type="evidence" value="ECO:0000314"/>
    <property type="project" value="CGD"/>
</dbReference>
<dbReference type="GO" id="GO:0005758">
    <property type="term" value="C:mitochondrial intermembrane space"/>
    <property type="evidence" value="ECO:0000318"/>
    <property type="project" value="GO_Central"/>
</dbReference>
<dbReference type="GO" id="GO:0005739">
    <property type="term" value="C:mitochondrion"/>
    <property type="evidence" value="ECO:0000314"/>
    <property type="project" value="CGD"/>
</dbReference>
<dbReference type="GO" id="GO:0009055">
    <property type="term" value="F:electron transfer activity"/>
    <property type="evidence" value="ECO:0000316"/>
    <property type="project" value="CGD"/>
</dbReference>
<dbReference type="GO" id="GO:0020037">
    <property type="term" value="F:heme binding"/>
    <property type="evidence" value="ECO:0007669"/>
    <property type="project" value="InterPro"/>
</dbReference>
<dbReference type="GO" id="GO:0046872">
    <property type="term" value="F:metal ion binding"/>
    <property type="evidence" value="ECO:0007669"/>
    <property type="project" value="UniProtKB-KW"/>
</dbReference>
<dbReference type="GO" id="GO:0030447">
    <property type="term" value="P:filamentous growth"/>
    <property type="evidence" value="ECO:0000315"/>
    <property type="project" value="CGD"/>
</dbReference>
<dbReference type="GO" id="GO:0006123">
    <property type="term" value="P:mitochondrial electron transport, cytochrome c to oxygen"/>
    <property type="evidence" value="ECO:0000318"/>
    <property type="project" value="GO_Central"/>
</dbReference>
<dbReference type="GO" id="GO:0006122">
    <property type="term" value="P:mitochondrial electron transport, ubiquinol to cytochrome c"/>
    <property type="evidence" value="ECO:0000316"/>
    <property type="project" value="CGD"/>
</dbReference>
<dbReference type="FunFam" id="1.10.760.10:FF:000001">
    <property type="entry name" value="Cytochrome c iso-1"/>
    <property type="match status" value="1"/>
</dbReference>
<dbReference type="Gene3D" id="1.10.760.10">
    <property type="entry name" value="Cytochrome c-like domain"/>
    <property type="match status" value="1"/>
</dbReference>
<dbReference type="InterPro" id="IPR009056">
    <property type="entry name" value="Cyt_c-like_dom"/>
</dbReference>
<dbReference type="InterPro" id="IPR036909">
    <property type="entry name" value="Cyt_c-like_dom_sf"/>
</dbReference>
<dbReference type="InterPro" id="IPR002327">
    <property type="entry name" value="Cyt_c_1A/1B"/>
</dbReference>
<dbReference type="PANTHER" id="PTHR11961">
    <property type="entry name" value="CYTOCHROME C"/>
    <property type="match status" value="1"/>
</dbReference>
<dbReference type="Pfam" id="PF00034">
    <property type="entry name" value="Cytochrom_C"/>
    <property type="match status" value="1"/>
</dbReference>
<dbReference type="PRINTS" id="PR00604">
    <property type="entry name" value="CYTCHRMECIAB"/>
</dbReference>
<dbReference type="SUPFAM" id="SSF46626">
    <property type="entry name" value="Cytochrome c"/>
    <property type="match status" value="1"/>
</dbReference>
<dbReference type="PROSITE" id="PS51007">
    <property type="entry name" value="CYTC"/>
    <property type="match status" value="1"/>
</dbReference>
<comment type="function">
    <text>Electron carrier protein. The oxidized form of the cytochrome c heme group can accept an electron from the heme group of the cytochrome c1 subunit of cytochrome reductase. Cytochrome c then transfers this electron to the cytochrome oxidase complex, the final protein carrier in the mitochondrial electron-transport chain.</text>
</comment>
<comment type="subcellular location">
    <subcellularLocation>
        <location>Mitochondrion intermembrane space</location>
    </subcellularLocation>
    <text>Loosely associated with the inner membrane.</text>
</comment>
<comment type="PTM">
    <text>Binds 1 heme c group covalently per subunit.</text>
</comment>
<comment type="similarity">
    <text evidence="3">Belongs to the cytochrome c family.</text>
</comment>
<comment type="online information" name="Protein Spotlight">
    <link uri="https://www.proteinspotlight.org/back_issues/076"/>
    <text>Life shuttle - Issue 76 of November 2006</text>
</comment>
<sequence>MPAPFEKGSEKKGATLFKTRCLQCHTVEKGGPHKVGPNLHGVFGRKSGLAEGYSYTDANKKKGVEWTEQTMSDYLENPKKYIPGTKMAFGGLKKPKDRNDLVTYLKKATS</sequence>
<gene>
    <name type="primary">CYC1</name>
    <name type="ordered locus">CAALFM_C210110WA</name>
    <name type="ORF">CaO19.1770</name>
    <name type="ORF">CaO19.9339</name>
</gene>
<accession>P53698</accession>
<accession>A0A1D8PIM8</accession>
<accession>Q59XT5</accession>
<reference key="1">
    <citation type="journal article" date="1997" name="Yeast">
        <title>Phylogenetic relationships of fungal cytochromes c.</title>
        <authorList>
            <person name="Janbon G."/>
            <person name="Rustchenko E."/>
            <person name="Klug S."/>
            <person name="Scherer S."/>
            <person name="Sherman F."/>
        </authorList>
    </citation>
    <scope>NUCLEOTIDE SEQUENCE [GENOMIC DNA]</scope>
    <source>
        <strain>SOR17</strain>
    </source>
</reference>
<reference key="2">
    <citation type="journal article" date="2004" name="Proc. Natl. Acad. Sci. U.S.A.">
        <title>The diploid genome sequence of Candida albicans.</title>
        <authorList>
            <person name="Jones T."/>
            <person name="Federspiel N.A."/>
            <person name="Chibana H."/>
            <person name="Dungan J."/>
            <person name="Kalman S."/>
            <person name="Magee B.B."/>
            <person name="Newport G."/>
            <person name="Thorstenson Y.R."/>
            <person name="Agabian N."/>
            <person name="Magee P.T."/>
            <person name="Davis R.W."/>
            <person name="Scherer S."/>
        </authorList>
    </citation>
    <scope>NUCLEOTIDE SEQUENCE [LARGE SCALE GENOMIC DNA]</scope>
    <source>
        <strain>SC5314 / ATCC MYA-2876</strain>
    </source>
</reference>
<reference key="3">
    <citation type="journal article" date="2007" name="Genome Biol.">
        <title>Assembly of the Candida albicans genome into sixteen supercontigs aligned on the eight chromosomes.</title>
        <authorList>
            <person name="van het Hoog M."/>
            <person name="Rast T.J."/>
            <person name="Martchenko M."/>
            <person name="Grindle S."/>
            <person name="Dignard D."/>
            <person name="Hogues H."/>
            <person name="Cuomo C."/>
            <person name="Berriman M."/>
            <person name="Scherer S."/>
            <person name="Magee B.B."/>
            <person name="Whiteway M."/>
            <person name="Chibana H."/>
            <person name="Nantel A."/>
            <person name="Magee P.T."/>
        </authorList>
    </citation>
    <scope>GENOME REANNOTATION</scope>
    <source>
        <strain>SC5314 / ATCC MYA-2876</strain>
    </source>
</reference>
<reference key="4">
    <citation type="journal article" date="2013" name="Genome Biol.">
        <title>Assembly of a phased diploid Candida albicans genome facilitates allele-specific measurements and provides a simple model for repeat and indel structure.</title>
        <authorList>
            <person name="Muzzey D."/>
            <person name="Schwartz K."/>
            <person name="Weissman J.S."/>
            <person name="Sherlock G."/>
        </authorList>
    </citation>
    <scope>NUCLEOTIDE SEQUENCE [LARGE SCALE GENOMIC DNA]</scope>
    <scope>GENOME REANNOTATION</scope>
    <source>
        <strain>SC5314 / ATCC MYA-2876</strain>
    </source>
</reference>
<protein>
    <recommendedName>
        <fullName>Cytochrome c</fullName>
    </recommendedName>
</protein>
<name>CYC_CANAL</name>
<keyword id="KW-0249">Electron transport</keyword>
<keyword id="KW-0349">Heme</keyword>
<keyword id="KW-0408">Iron</keyword>
<keyword id="KW-0479">Metal-binding</keyword>
<keyword id="KW-0488">Methylation</keyword>
<keyword id="KW-0496">Mitochondrion</keyword>
<keyword id="KW-1185">Reference proteome</keyword>
<keyword id="KW-0679">Respiratory chain</keyword>
<keyword id="KW-0813">Transport</keyword>
<proteinExistence type="inferred from homology"/>
<feature type="initiator methionine" description="Removed" evidence="1">
    <location>
        <position position="1"/>
    </location>
</feature>
<feature type="chain" id="PRO_0000108318" description="Cytochrome c">
    <location>
        <begin position="2"/>
        <end position="110"/>
    </location>
</feature>
<feature type="binding site" description="covalent" evidence="2">
    <location>
        <position position="21"/>
    </location>
    <ligand>
        <name>heme c</name>
        <dbReference type="ChEBI" id="CHEBI:61717"/>
    </ligand>
</feature>
<feature type="binding site" description="covalent" evidence="2">
    <location>
        <position position="24"/>
    </location>
    <ligand>
        <name>heme c</name>
        <dbReference type="ChEBI" id="CHEBI:61717"/>
    </ligand>
</feature>
<feature type="binding site" description="axial binding residue" evidence="2">
    <location>
        <position position="25"/>
    </location>
    <ligand>
        <name>heme c</name>
        <dbReference type="ChEBI" id="CHEBI:61717"/>
    </ligand>
    <ligandPart>
        <name>Fe</name>
        <dbReference type="ChEBI" id="CHEBI:18248"/>
    </ligandPart>
</feature>
<feature type="binding site" description="axial binding residue" evidence="2">
    <location>
        <position position="87"/>
    </location>
    <ligand>
        <name>heme c</name>
        <dbReference type="ChEBI" id="CHEBI:61717"/>
    </ligand>
    <ligandPart>
        <name>Fe</name>
        <dbReference type="ChEBI" id="CHEBI:18248"/>
    </ligandPart>
</feature>
<feature type="modified residue" description="N6,N6,N6-trimethyllysine" evidence="1">
    <location>
        <position position="79"/>
    </location>
</feature>